<proteinExistence type="inferred from homology"/>
<evidence type="ECO:0000250" key="1"/>
<evidence type="ECO:0000255" key="2">
    <source>
        <dbReference type="HAMAP-Rule" id="MF_00100"/>
    </source>
</evidence>
<evidence type="ECO:0000256" key="3">
    <source>
        <dbReference type="SAM" id="MobiDB-lite"/>
    </source>
</evidence>
<feature type="chain" id="PRO_0000137265" description="Translation initiation factor IF-2">
    <location>
        <begin position="1"/>
        <end position="953"/>
    </location>
</feature>
<feature type="domain" description="tr-type G">
    <location>
        <begin position="454"/>
        <end position="623"/>
    </location>
</feature>
<feature type="region of interest" description="Disordered" evidence="3">
    <location>
        <begin position="48"/>
        <end position="240"/>
    </location>
</feature>
<feature type="region of interest" description="Disordered" evidence="3">
    <location>
        <begin position="279"/>
        <end position="363"/>
    </location>
</feature>
<feature type="region of interest" description="G1" evidence="1">
    <location>
        <begin position="463"/>
        <end position="470"/>
    </location>
</feature>
<feature type="region of interest" description="G2" evidence="1">
    <location>
        <begin position="488"/>
        <end position="492"/>
    </location>
</feature>
<feature type="region of interest" description="G3" evidence="1">
    <location>
        <begin position="509"/>
        <end position="512"/>
    </location>
</feature>
<feature type="region of interest" description="G4" evidence="1">
    <location>
        <begin position="563"/>
        <end position="566"/>
    </location>
</feature>
<feature type="region of interest" description="G5" evidence="1">
    <location>
        <begin position="599"/>
        <end position="601"/>
    </location>
</feature>
<feature type="compositionally biased region" description="Basic and acidic residues" evidence="3">
    <location>
        <begin position="80"/>
        <end position="89"/>
    </location>
</feature>
<feature type="compositionally biased region" description="Basic and acidic residues" evidence="3">
    <location>
        <begin position="98"/>
        <end position="111"/>
    </location>
</feature>
<feature type="compositionally biased region" description="Basic and acidic residues" evidence="3">
    <location>
        <begin position="140"/>
        <end position="188"/>
    </location>
</feature>
<feature type="compositionally biased region" description="Polar residues" evidence="3">
    <location>
        <begin position="191"/>
        <end position="207"/>
    </location>
</feature>
<feature type="compositionally biased region" description="Basic and acidic residues" evidence="3">
    <location>
        <begin position="229"/>
        <end position="240"/>
    </location>
</feature>
<feature type="compositionally biased region" description="Polar residues" evidence="3">
    <location>
        <begin position="282"/>
        <end position="291"/>
    </location>
</feature>
<feature type="compositionally biased region" description="Basic and acidic residues" evidence="3">
    <location>
        <begin position="300"/>
        <end position="317"/>
    </location>
</feature>
<feature type="compositionally biased region" description="Low complexity" evidence="3">
    <location>
        <begin position="322"/>
        <end position="338"/>
    </location>
</feature>
<feature type="compositionally biased region" description="Basic residues" evidence="3">
    <location>
        <begin position="339"/>
        <end position="348"/>
    </location>
</feature>
<feature type="binding site" evidence="2">
    <location>
        <begin position="463"/>
        <end position="470"/>
    </location>
    <ligand>
        <name>GTP</name>
        <dbReference type="ChEBI" id="CHEBI:37565"/>
    </ligand>
</feature>
<feature type="binding site" evidence="2">
    <location>
        <begin position="509"/>
        <end position="513"/>
    </location>
    <ligand>
        <name>GTP</name>
        <dbReference type="ChEBI" id="CHEBI:37565"/>
    </ligand>
</feature>
<feature type="binding site" evidence="2">
    <location>
        <begin position="563"/>
        <end position="566"/>
    </location>
    <ligand>
        <name>GTP</name>
        <dbReference type="ChEBI" id="CHEBI:37565"/>
    </ligand>
</feature>
<dbReference type="EMBL" id="AE004092">
    <property type="protein sequence ID" value="AAK34466.1"/>
    <property type="molecule type" value="Genomic_DNA"/>
</dbReference>
<dbReference type="EMBL" id="CP000017">
    <property type="protein sequence ID" value="AAZ52027.1"/>
    <property type="molecule type" value="Genomic_DNA"/>
</dbReference>
<dbReference type="RefSeq" id="NP_269745.1">
    <property type="nucleotide sequence ID" value="NC_002737.2"/>
</dbReference>
<dbReference type="SMR" id="Q99YG1"/>
<dbReference type="PaxDb" id="1314-HKU360_01462"/>
<dbReference type="KEGG" id="spy:SPy_1721"/>
<dbReference type="KEGG" id="spz:M5005_Spy1409"/>
<dbReference type="PATRIC" id="fig|160490.10.peg.1496"/>
<dbReference type="HOGENOM" id="CLU_006301_5_0_9"/>
<dbReference type="OMA" id="RKNPWMN"/>
<dbReference type="Proteomes" id="UP000000750">
    <property type="component" value="Chromosome"/>
</dbReference>
<dbReference type="GO" id="GO:0005829">
    <property type="term" value="C:cytosol"/>
    <property type="evidence" value="ECO:0007669"/>
    <property type="project" value="TreeGrafter"/>
</dbReference>
<dbReference type="GO" id="GO:0005525">
    <property type="term" value="F:GTP binding"/>
    <property type="evidence" value="ECO:0007669"/>
    <property type="project" value="UniProtKB-KW"/>
</dbReference>
<dbReference type="GO" id="GO:0003924">
    <property type="term" value="F:GTPase activity"/>
    <property type="evidence" value="ECO:0007669"/>
    <property type="project" value="UniProtKB-UniRule"/>
</dbReference>
<dbReference type="GO" id="GO:0003743">
    <property type="term" value="F:translation initiation factor activity"/>
    <property type="evidence" value="ECO:0007669"/>
    <property type="project" value="UniProtKB-UniRule"/>
</dbReference>
<dbReference type="CDD" id="cd01887">
    <property type="entry name" value="IF2_eIF5B"/>
    <property type="match status" value="1"/>
</dbReference>
<dbReference type="CDD" id="cd03702">
    <property type="entry name" value="IF2_mtIF2_II"/>
    <property type="match status" value="1"/>
</dbReference>
<dbReference type="CDD" id="cd03692">
    <property type="entry name" value="mtIF2_IVc"/>
    <property type="match status" value="1"/>
</dbReference>
<dbReference type="FunFam" id="2.40.30.10:FF:000007">
    <property type="entry name" value="Translation initiation factor IF-2"/>
    <property type="match status" value="1"/>
</dbReference>
<dbReference type="FunFam" id="2.40.30.10:FF:000008">
    <property type="entry name" value="Translation initiation factor IF-2"/>
    <property type="match status" value="1"/>
</dbReference>
<dbReference type="FunFam" id="3.40.50.10050:FF:000001">
    <property type="entry name" value="Translation initiation factor IF-2"/>
    <property type="match status" value="1"/>
</dbReference>
<dbReference type="FunFam" id="3.40.50.300:FF:000019">
    <property type="entry name" value="Translation initiation factor IF-2"/>
    <property type="match status" value="1"/>
</dbReference>
<dbReference type="Gene3D" id="1.10.10.2480">
    <property type="match status" value="1"/>
</dbReference>
<dbReference type="Gene3D" id="3.40.50.300">
    <property type="entry name" value="P-loop containing nucleotide triphosphate hydrolases"/>
    <property type="match status" value="1"/>
</dbReference>
<dbReference type="Gene3D" id="2.40.30.10">
    <property type="entry name" value="Translation factors"/>
    <property type="match status" value="2"/>
</dbReference>
<dbReference type="Gene3D" id="3.40.50.10050">
    <property type="entry name" value="Translation initiation factor IF- 2, domain 3"/>
    <property type="match status" value="1"/>
</dbReference>
<dbReference type="HAMAP" id="MF_00100_B">
    <property type="entry name" value="IF_2_B"/>
    <property type="match status" value="1"/>
</dbReference>
<dbReference type="InterPro" id="IPR053905">
    <property type="entry name" value="EF-G-like_DII"/>
</dbReference>
<dbReference type="InterPro" id="IPR044145">
    <property type="entry name" value="IF2_II"/>
</dbReference>
<dbReference type="InterPro" id="IPR006847">
    <property type="entry name" value="IF2_N"/>
</dbReference>
<dbReference type="InterPro" id="IPR027417">
    <property type="entry name" value="P-loop_NTPase"/>
</dbReference>
<dbReference type="InterPro" id="IPR005225">
    <property type="entry name" value="Small_GTP-bd"/>
</dbReference>
<dbReference type="InterPro" id="IPR000795">
    <property type="entry name" value="T_Tr_GTP-bd_dom"/>
</dbReference>
<dbReference type="InterPro" id="IPR000178">
    <property type="entry name" value="TF_IF2_bacterial-like"/>
</dbReference>
<dbReference type="InterPro" id="IPR015760">
    <property type="entry name" value="TIF_IF2"/>
</dbReference>
<dbReference type="InterPro" id="IPR023115">
    <property type="entry name" value="TIF_IF2_dom3"/>
</dbReference>
<dbReference type="InterPro" id="IPR036925">
    <property type="entry name" value="TIF_IF2_dom3_sf"/>
</dbReference>
<dbReference type="InterPro" id="IPR009000">
    <property type="entry name" value="Transl_B-barrel_sf"/>
</dbReference>
<dbReference type="NCBIfam" id="TIGR00487">
    <property type="entry name" value="IF-2"/>
    <property type="match status" value="1"/>
</dbReference>
<dbReference type="NCBIfam" id="TIGR00231">
    <property type="entry name" value="small_GTP"/>
    <property type="match status" value="1"/>
</dbReference>
<dbReference type="PANTHER" id="PTHR43381:SF5">
    <property type="entry name" value="TR-TYPE G DOMAIN-CONTAINING PROTEIN"/>
    <property type="match status" value="1"/>
</dbReference>
<dbReference type="PANTHER" id="PTHR43381">
    <property type="entry name" value="TRANSLATION INITIATION FACTOR IF-2-RELATED"/>
    <property type="match status" value="1"/>
</dbReference>
<dbReference type="Pfam" id="PF22042">
    <property type="entry name" value="EF-G_D2"/>
    <property type="match status" value="1"/>
</dbReference>
<dbReference type="Pfam" id="PF00009">
    <property type="entry name" value="GTP_EFTU"/>
    <property type="match status" value="1"/>
</dbReference>
<dbReference type="Pfam" id="PF11987">
    <property type="entry name" value="IF-2"/>
    <property type="match status" value="1"/>
</dbReference>
<dbReference type="Pfam" id="PF04760">
    <property type="entry name" value="IF2_N"/>
    <property type="match status" value="2"/>
</dbReference>
<dbReference type="PRINTS" id="PR00449">
    <property type="entry name" value="RASTRNSFRMNG"/>
</dbReference>
<dbReference type="SUPFAM" id="SSF52156">
    <property type="entry name" value="Initiation factor IF2/eIF5b, domain 3"/>
    <property type="match status" value="1"/>
</dbReference>
<dbReference type="SUPFAM" id="SSF52540">
    <property type="entry name" value="P-loop containing nucleoside triphosphate hydrolases"/>
    <property type="match status" value="1"/>
</dbReference>
<dbReference type="SUPFAM" id="SSF50447">
    <property type="entry name" value="Translation proteins"/>
    <property type="match status" value="2"/>
</dbReference>
<dbReference type="PROSITE" id="PS51722">
    <property type="entry name" value="G_TR_2"/>
    <property type="match status" value="1"/>
</dbReference>
<dbReference type="PROSITE" id="PS01176">
    <property type="entry name" value="IF2"/>
    <property type="match status" value="1"/>
</dbReference>
<reference key="1">
    <citation type="journal article" date="2001" name="Proc. Natl. Acad. Sci. U.S.A.">
        <title>Complete genome sequence of an M1 strain of Streptococcus pyogenes.</title>
        <authorList>
            <person name="Ferretti J.J."/>
            <person name="McShan W.M."/>
            <person name="Ajdic D.J."/>
            <person name="Savic D.J."/>
            <person name="Savic G."/>
            <person name="Lyon K."/>
            <person name="Primeaux C."/>
            <person name="Sezate S."/>
            <person name="Suvorov A.N."/>
            <person name="Kenton S."/>
            <person name="Lai H.S."/>
            <person name="Lin S.P."/>
            <person name="Qian Y."/>
            <person name="Jia H.G."/>
            <person name="Najar F.Z."/>
            <person name="Ren Q."/>
            <person name="Zhu H."/>
            <person name="Song L."/>
            <person name="White J."/>
            <person name="Yuan X."/>
            <person name="Clifton S.W."/>
            <person name="Roe B.A."/>
            <person name="McLaughlin R.E."/>
        </authorList>
    </citation>
    <scope>NUCLEOTIDE SEQUENCE [LARGE SCALE GENOMIC DNA]</scope>
    <source>
        <strain>ATCC 700294 / SF370 / Serotype M1</strain>
    </source>
</reference>
<reference key="2">
    <citation type="journal article" date="2005" name="J. Infect. Dis.">
        <title>Evolutionary origin and emergence of a highly successful clone of serotype M1 group A Streptococcus involved multiple horizontal gene transfer events.</title>
        <authorList>
            <person name="Sumby P."/>
            <person name="Porcella S.F."/>
            <person name="Madrigal A.G."/>
            <person name="Barbian K.D."/>
            <person name="Virtaneva K."/>
            <person name="Ricklefs S.M."/>
            <person name="Sturdevant D.E."/>
            <person name="Graham M.R."/>
            <person name="Vuopio-Varkila J."/>
            <person name="Hoe N.P."/>
            <person name="Musser J.M."/>
        </authorList>
    </citation>
    <scope>NUCLEOTIDE SEQUENCE [LARGE SCALE GENOMIC DNA]</scope>
    <source>
        <strain>ATCC BAA-947 / MGAS5005 / Serotype M1</strain>
    </source>
</reference>
<comment type="function">
    <text evidence="2">One of the essential components for the initiation of protein synthesis. Protects formylmethionyl-tRNA from spontaneous hydrolysis and promotes its binding to the 30S ribosomal subunits. Also involved in the hydrolysis of GTP during the formation of the 70S ribosomal complex.</text>
</comment>
<comment type="subcellular location">
    <subcellularLocation>
        <location evidence="2">Cytoplasm</location>
    </subcellularLocation>
</comment>
<comment type="similarity">
    <text evidence="2">Belongs to the TRAFAC class translation factor GTPase superfamily. Classic translation factor GTPase family. IF-2 subfamily.</text>
</comment>
<sequence>MSKKRLHEIAKEIGKSSKEVVEHAKYLGLDVKSHASSVEEADAKKIISSFSKASKPDVTASQTVKPKEVAQPSVTVVKETGSEHVEKTQVSKPKSRNFKAEREARAKEQAARKQANGSSHRSQERRGGYRQPNNHQTNEQGDKRITHRSQGDTNDKRIERKASNVSPRHDNHQLVGDRNRSFAKENHKNGRFTNQKKQGRQEPQSKSPKIDFKARAAALKAEQNAEYSRQSETRFRAQQEAKRLAELARQEAKEAALKAQAEEMSHREAALKSIEEAETKLKSSNISAKSTADNRRKKQARPEKNRELTHHSQEGQKKNKKSWNSQNQVRNQKNSNWNKNKKTKKGKNVKNTNTAPKPVTERKFHELPKEFEYTEGMTVAEIAKRIKREPAEIVKKLFMMGVMATQNQSLDGDTIELLMVDYGIEAKAKVEVDDADIERFFEDENYLNPENIVERAPVVTIMGHVDHGKTTLLDTLRNSRVATGEAGGITQHIGAYQIEEAGKKITFLDTPGHAAFTSMRARGASVTDITILIVAADDGVMPQTIEAINHSKAAGVPIIVAINKIDKPGANPERVIAELAEYGIISTAWGGECEFVEISAKFNKNIDELLETVLLVAEVEELKADPTVRAIGTVIEARLDKGKGAIATLLVQQGTLHVQDPIVVGNTFGRVRAMVNDLGRRVKSAEPSTPVSITGLNETPMAGDHFAVYADEKAARAAGEERSKRALLKQRQNTQRVSLDNLFDTLKAGEIKTVNVIIKADVQGSVEALAASLVKIEVEGVRVNVVHSAVGAINESDVTLAEASNAVIIGFNVRPTPQARQQADTDDVEIRLHSIIYKVIEEVEEAMKGKLDPVYQEKILGEAIIRETFKVSKVGTIGGFMVINGKVTRDSSVRVIRDSVVIFDGKLASLKHYKDDVKEVGNAQEGGLMIENFNDLKVDDTIEAYIMEEIVRK</sequence>
<accession>Q99YG1</accession>
<accession>Q48X98</accession>
<organism>
    <name type="scientific">Streptococcus pyogenes serotype M1</name>
    <dbReference type="NCBI Taxonomy" id="301447"/>
    <lineage>
        <taxon>Bacteria</taxon>
        <taxon>Bacillati</taxon>
        <taxon>Bacillota</taxon>
        <taxon>Bacilli</taxon>
        <taxon>Lactobacillales</taxon>
        <taxon>Streptococcaceae</taxon>
        <taxon>Streptococcus</taxon>
    </lineage>
</organism>
<keyword id="KW-0963">Cytoplasm</keyword>
<keyword id="KW-0342">GTP-binding</keyword>
<keyword id="KW-0396">Initiation factor</keyword>
<keyword id="KW-0547">Nucleotide-binding</keyword>
<keyword id="KW-0648">Protein biosynthesis</keyword>
<keyword id="KW-1185">Reference proteome</keyword>
<protein>
    <recommendedName>
        <fullName evidence="2">Translation initiation factor IF-2</fullName>
    </recommendedName>
</protein>
<gene>
    <name evidence="2" type="primary">infB</name>
    <name type="ordered locus">SPy_1721</name>
    <name type="ordered locus">M5005_Spy1409</name>
</gene>
<name>IF2_STRP1</name>